<sequence length="125" mass="13677">MIYGIGTDIVSLKRIIRLNKKFGQAFAGRILTPEELLEFPQAGKPVNYLAKRFAAKEAFAKAVGTGIRGAVSFRNIGIGHDALGKPEFFYGPALSKWLEEQGISRVSLSMSDEEDTVLAFVVAEK</sequence>
<dbReference type="EC" id="2.7.8.7" evidence="1"/>
<dbReference type="EMBL" id="AF194079">
    <property type="protein sequence ID" value="AAF08820.1"/>
    <property type="molecule type" value="Genomic_DNA"/>
</dbReference>
<dbReference type="SMR" id="P0A0Q6"/>
<dbReference type="OMA" id="DERHYAV"/>
<dbReference type="GO" id="GO:0005737">
    <property type="term" value="C:cytoplasm"/>
    <property type="evidence" value="ECO:0007669"/>
    <property type="project" value="UniProtKB-SubCell"/>
</dbReference>
<dbReference type="GO" id="GO:0008897">
    <property type="term" value="F:holo-[acyl-carrier-protein] synthase activity"/>
    <property type="evidence" value="ECO:0007669"/>
    <property type="project" value="UniProtKB-UniRule"/>
</dbReference>
<dbReference type="GO" id="GO:0000287">
    <property type="term" value="F:magnesium ion binding"/>
    <property type="evidence" value="ECO:0007669"/>
    <property type="project" value="UniProtKB-UniRule"/>
</dbReference>
<dbReference type="GO" id="GO:0006633">
    <property type="term" value="P:fatty acid biosynthetic process"/>
    <property type="evidence" value="ECO:0007669"/>
    <property type="project" value="UniProtKB-UniRule"/>
</dbReference>
<dbReference type="Gene3D" id="3.90.470.20">
    <property type="entry name" value="4'-phosphopantetheinyl transferase domain"/>
    <property type="match status" value="1"/>
</dbReference>
<dbReference type="HAMAP" id="MF_00101">
    <property type="entry name" value="AcpS"/>
    <property type="match status" value="1"/>
</dbReference>
<dbReference type="InterPro" id="IPR008278">
    <property type="entry name" value="4-PPantetheinyl_Trfase_dom"/>
</dbReference>
<dbReference type="InterPro" id="IPR037143">
    <property type="entry name" value="4-PPantetheinyl_Trfase_dom_sf"/>
</dbReference>
<dbReference type="InterPro" id="IPR002582">
    <property type="entry name" value="ACPS"/>
</dbReference>
<dbReference type="InterPro" id="IPR004568">
    <property type="entry name" value="Ppantetheine-prot_Trfase_dom"/>
</dbReference>
<dbReference type="NCBIfam" id="TIGR00516">
    <property type="entry name" value="acpS"/>
    <property type="match status" value="1"/>
</dbReference>
<dbReference type="NCBIfam" id="TIGR00556">
    <property type="entry name" value="pantethn_trn"/>
    <property type="match status" value="1"/>
</dbReference>
<dbReference type="Pfam" id="PF01648">
    <property type="entry name" value="ACPS"/>
    <property type="match status" value="1"/>
</dbReference>
<dbReference type="SUPFAM" id="SSF56214">
    <property type="entry name" value="4'-phosphopantetheinyl transferase"/>
    <property type="match status" value="1"/>
</dbReference>
<comment type="function">
    <text evidence="1">Transfers the 4'-phosphopantetheine moiety from coenzyme A to a Ser of acyl-carrier-protein.</text>
</comment>
<comment type="catalytic activity">
    <reaction evidence="1">
        <text>apo-[ACP] + CoA = holo-[ACP] + adenosine 3',5'-bisphosphate + H(+)</text>
        <dbReference type="Rhea" id="RHEA:12068"/>
        <dbReference type="Rhea" id="RHEA-COMP:9685"/>
        <dbReference type="Rhea" id="RHEA-COMP:9690"/>
        <dbReference type="ChEBI" id="CHEBI:15378"/>
        <dbReference type="ChEBI" id="CHEBI:29999"/>
        <dbReference type="ChEBI" id="CHEBI:57287"/>
        <dbReference type="ChEBI" id="CHEBI:58343"/>
        <dbReference type="ChEBI" id="CHEBI:64479"/>
        <dbReference type="EC" id="2.7.8.7"/>
    </reaction>
</comment>
<comment type="cofactor">
    <cofactor evidence="1">
        <name>Mg(2+)</name>
        <dbReference type="ChEBI" id="CHEBI:18420"/>
    </cofactor>
</comment>
<comment type="subcellular location">
    <subcellularLocation>
        <location evidence="1">Cytoplasm</location>
    </subcellularLocation>
</comment>
<comment type="similarity">
    <text evidence="1">Belongs to the P-Pant transferase superfamily. AcpS family.</text>
</comment>
<proteinExistence type="inferred from homology"/>
<feature type="chain" id="PRO_0000175678" description="Holo-[acyl-carrier-protein] synthase">
    <location>
        <begin position="1"/>
        <end position="125"/>
    </location>
</feature>
<feature type="binding site" evidence="1">
    <location>
        <position position="8"/>
    </location>
    <ligand>
        <name>Mg(2+)</name>
        <dbReference type="ChEBI" id="CHEBI:18420"/>
    </ligand>
</feature>
<feature type="binding site" evidence="1">
    <location>
        <position position="57"/>
    </location>
    <ligand>
        <name>Mg(2+)</name>
        <dbReference type="ChEBI" id="CHEBI:18420"/>
    </ligand>
</feature>
<reference key="1">
    <citation type="journal article" date="2000" name="Mol. Microbiol.">
        <title>Frequent interspecific genetic exchange between commensal Neisseriae and Neisseria meningitidis.</title>
        <authorList>
            <person name="Linz B."/>
            <person name="Schenker M."/>
            <person name="Zhu P."/>
            <person name="Achtman M."/>
        </authorList>
    </citation>
    <scope>NUCLEOTIDE SEQUENCE [GENOMIC DNA]</scope>
    <source>
        <strain>Z4400 / Serogroup C</strain>
    </source>
</reference>
<name>ACPS_NEIMC</name>
<keyword id="KW-0963">Cytoplasm</keyword>
<keyword id="KW-0275">Fatty acid biosynthesis</keyword>
<keyword id="KW-0276">Fatty acid metabolism</keyword>
<keyword id="KW-0444">Lipid biosynthesis</keyword>
<keyword id="KW-0443">Lipid metabolism</keyword>
<keyword id="KW-0460">Magnesium</keyword>
<keyword id="KW-0479">Metal-binding</keyword>
<keyword id="KW-0808">Transferase</keyword>
<evidence type="ECO:0000255" key="1">
    <source>
        <dbReference type="HAMAP-Rule" id="MF_00101"/>
    </source>
</evidence>
<gene>
    <name evidence="1" type="primary">acpS</name>
    <name type="synonym">dpj</name>
</gene>
<organism>
    <name type="scientific">Neisseria meningitidis serogroup C</name>
    <dbReference type="NCBI Taxonomy" id="135720"/>
    <lineage>
        <taxon>Bacteria</taxon>
        <taxon>Pseudomonadati</taxon>
        <taxon>Pseudomonadota</taxon>
        <taxon>Betaproteobacteria</taxon>
        <taxon>Neisseriales</taxon>
        <taxon>Neisseriaceae</taxon>
        <taxon>Neisseria</taxon>
    </lineage>
</organism>
<accession>P0A0Q6</accession>
<accession>Q9RML8</accession>
<protein>
    <recommendedName>
        <fullName evidence="1">Holo-[acyl-carrier-protein] synthase</fullName>
        <shortName evidence="1">Holo-ACP synthase</shortName>
        <ecNumber evidence="1">2.7.8.7</ecNumber>
    </recommendedName>
    <alternativeName>
        <fullName evidence="1">4'-phosphopantetheinyl transferase AcpS</fullName>
    </alternativeName>
</protein>